<comment type="cofactor">
    <cofactor evidence="1">
        <name>Zn(2+)</name>
        <dbReference type="ChEBI" id="CHEBI:29105"/>
    </cofactor>
    <text evidence="1">Binds 2 Zn(2+) ions per subunit.</text>
</comment>
<comment type="similarity">
    <text evidence="2">Belongs to the peptidase M20A family.</text>
</comment>
<gene>
    <name type="ordered locus">SSP1012</name>
</gene>
<accession>Q49YI2</accession>
<sequence length="469" mass="52699">MWRDKVKEYEDFILEDLKGLLSIESVREDDKASAENPVGPGPRQALDYMYKIAERDGFGTHDVDHIAGRIEAGKGDDVFGILCHVDVVPAGDGWDSDPFNPVVTDDKIIARGTLDDKGPTIAAYYAVKILNEMNVNWKKRIHIIIGTDEESDWKCTERYFQTEEMPELGFAPDAEFPAIHGEKGISTFDVIQNEKADDQDEPEYELRSFVSGQRYNMVPDEAIANVAVKENMTDVIQNFEQYLNEHDVEGESVVDSGVLVLKVQGKAVHGMDPSIGVNAGLYLLNFLATLNLDKTAANFVAFSERYLFESHFGEKMGMKFHTDVMGDVTTNVGIITYDNQDGGKFGINLRYPEGFEFEESLTRFKGEIQSLGFSIELGKNQTPHYVEKDDPFLQSLVQAYRNQTGDDTEPYTIGGGTYARNLDKGVAFGAMFSDSEDLMHQKNEYITKKQLFNATSIYLESLYKLCVEE</sequence>
<keyword id="KW-0224">Dipeptidase</keyword>
<keyword id="KW-0378">Hydrolase</keyword>
<keyword id="KW-0479">Metal-binding</keyword>
<keyword id="KW-0482">Metalloprotease</keyword>
<keyword id="KW-0645">Protease</keyword>
<keyword id="KW-1185">Reference proteome</keyword>
<keyword id="KW-0862">Zinc</keyword>
<dbReference type="EC" id="3.4.13.-"/>
<dbReference type="EMBL" id="AP008934">
    <property type="protein sequence ID" value="BAE18157.1"/>
    <property type="molecule type" value="Genomic_DNA"/>
</dbReference>
<dbReference type="RefSeq" id="WP_011302862.1">
    <property type="nucleotide sequence ID" value="NC_007350.1"/>
</dbReference>
<dbReference type="SMR" id="Q49YI2"/>
<dbReference type="GeneID" id="3615706"/>
<dbReference type="KEGG" id="ssp:SSP1012"/>
<dbReference type="PATRIC" id="fig|342451.11.peg.1011"/>
<dbReference type="eggNOG" id="COG0624">
    <property type="taxonomic scope" value="Bacteria"/>
</dbReference>
<dbReference type="HOGENOM" id="CLU_031786_2_0_9"/>
<dbReference type="OrthoDB" id="9761532at2"/>
<dbReference type="Proteomes" id="UP000006371">
    <property type="component" value="Chromosome"/>
</dbReference>
<dbReference type="GO" id="GO:0008777">
    <property type="term" value="F:acetylornithine deacetylase activity"/>
    <property type="evidence" value="ECO:0007669"/>
    <property type="project" value="TreeGrafter"/>
</dbReference>
<dbReference type="GO" id="GO:0016805">
    <property type="term" value="F:dipeptidase activity"/>
    <property type="evidence" value="ECO:0007669"/>
    <property type="project" value="UniProtKB-KW"/>
</dbReference>
<dbReference type="GO" id="GO:0008237">
    <property type="term" value="F:metallopeptidase activity"/>
    <property type="evidence" value="ECO:0007669"/>
    <property type="project" value="UniProtKB-KW"/>
</dbReference>
<dbReference type="GO" id="GO:0008270">
    <property type="term" value="F:zinc ion binding"/>
    <property type="evidence" value="ECO:0007669"/>
    <property type="project" value="InterPro"/>
</dbReference>
<dbReference type="GO" id="GO:0006526">
    <property type="term" value="P:L-arginine biosynthetic process"/>
    <property type="evidence" value="ECO:0007669"/>
    <property type="project" value="TreeGrafter"/>
</dbReference>
<dbReference type="GO" id="GO:0006508">
    <property type="term" value="P:proteolysis"/>
    <property type="evidence" value="ECO:0007669"/>
    <property type="project" value="UniProtKB-KW"/>
</dbReference>
<dbReference type="CDD" id="cd03888">
    <property type="entry name" value="M20_PepV"/>
    <property type="match status" value="1"/>
</dbReference>
<dbReference type="Gene3D" id="3.30.70.360">
    <property type="match status" value="2"/>
</dbReference>
<dbReference type="Gene3D" id="3.40.630.10">
    <property type="entry name" value="Zn peptidases"/>
    <property type="match status" value="1"/>
</dbReference>
<dbReference type="InterPro" id="IPR036264">
    <property type="entry name" value="Bact_exopeptidase_dim_dom"/>
</dbReference>
<dbReference type="InterPro" id="IPR010964">
    <property type="entry name" value="M20A_pepV-rel"/>
</dbReference>
<dbReference type="InterPro" id="IPR002933">
    <property type="entry name" value="Peptidase_M20"/>
</dbReference>
<dbReference type="InterPro" id="IPR050072">
    <property type="entry name" value="Peptidase_M20A"/>
</dbReference>
<dbReference type="NCBIfam" id="TIGR01887">
    <property type="entry name" value="dipeptidaselike"/>
    <property type="match status" value="1"/>
</dbReference>
<dbReference type="NCBIfam" id="NF005591">
    <property type="entry name" value="PRK07318.1"/>
    <property type="match status" value="1"/>
</dbReference>
<dbReference type="PANTHER" id="PTHR43808">
    <property type="entry name" value="ACETYLORNITHINE DEACETYLASE"/>
    <property type="match status" value="1"/>
</dbReference>
<dbReference type="PANTHER" id="PTHR43808:SF31">
    <property type="entry name" value="N-ACETYL-L-CITRULLINE DEACETYLASE"/>
    <property type="match status" value="1"/>
</dbReference>
<dbReference type="Pfam" id="PF01546">
    <property type="entry name" value="Peptidase_M20"/>
    <property type="match status" value="1"/>
</dbReference>
<dbReference type="SUPFAM" id="SSF55031">
    <property type="entry name" value="Bacterial exopeptidase dimerisation domain"/>
    <property type="match status" value="1"/>
</dbReference>
<dbReference type="SUPFAM" id="SSF53187">
    <property type="entry name" value="Zn-dependent exopeptidases"/>
    <property type="match status" value="1"/>
</dbReference>
<feature type="chain" id="PRO_0000282637" description="Putative dipeptidase SSP1012">
    <location>
        <begin position="1"/>
        <end position="469"/>
    </location>
</feature>
<feature type="active site" evidence="1">
    <location>
        <position position="86"/>
    </location>
</feature>
<feature type="active site" description="Proton acceptor" evidence="1">
    <location>
        <position position="149"/>
    </location>
</feature>
<feature type="binding site" evidence="1">
    <location>
        <position position="84"/>
    </location>
    <ligand>
        <name>Zn(2+)</name>
        <dbReference type="ChEBI" id="CHEBI:29105"/>
        <label>2</label>
    </ligand>
</feature>
<feature type="binding site" evidence="1">
    <location>
        <position position="115"/>
    </location>
    <ligand>
        <name>Zn(2+)</name>
        <dbReference type="ChEBI" id="CHEBI:29105"/>
        <label>1</label>
    </ligand>
</feature>
<feature type="binding site" evidence="1">
    <location>
        <position position="115"/>
    </location>
    <ligand>
        <name>Zn(2+)</name>
        <dbReference type="ChEBI" id="CHEBI:29105"/>
        <label>2</label>
    </ligand>
</feature>
<feature type="binding site" evidence="1">
    <location>
        <position position="150"/>
    </location>
    <ligand>
        <name>Zn(2+)</name>
        <dbReference type="ChEBI" id="CHEBI:29105"/>
        <label>1</label>
    </ligand>
</feature>
<feature type="binding site" evidence="1">
    <location>
        <position position="173"/>
    </location>
    <ligand>
        <name>Zn(2+)</name>
        <dbReference type="ChEBI" id="CHEBI:29105"/>
        <label>2</label>
    </ligand>
</feature>
<feature type="binding site" evidence="1">
    <location>
        <position position="440"/>
    </location>
    <ligand>
        <name>Zn(2+)</name>
        <dbReference type="ChEBI" id="CHEBI:29105"/>
        <label>1</label>
    </ligand>
</feature>
<proteinExistence type="inferred from homology"/>
<protein>
    <recommendedName>
        <fullName>Putative dipeptidase SSP1012</fullName>
        <ecNumber>3.4.13.-</ecNumber>
    </recommendedName>
</protein>
<name>PEPVL_STAS1</name>
<evidence type="ECO:0000250" key="1"/>
<evidence type="ECO:0000305" key="2"/>
<reference key="1">
    <citation type="journal article" date="2005" name="Proc. Natl. Acad. Sci. U.S.A.">
        <title>Whole genome sequence of Staphylococcus saprophyticus reveals the pathogenesis of uncomplicated urinary tract infection.</title>
        <authorList>
            <person name="Kuroda M."/>
            <person name="Yamashita A."/>
            <person name="Hirakawa H."/>
            <person name="Kumano M."/>
            <person name="Morikawa K."/>
            <person name="Higashide M."/>
            <person name="Maruyama A."/>
            <person name="Inose Y."/>
            <person name="Matoba K."/>
            <person name="Toh H."/>
            <person name="Kuhara S."/>
            <person name="Hattori M."/>
            <person name="Ohta T."/>
        </authorList>
    </citation>
    <scope>NUCLEOTIDE SEQUENCE [LARGE SCALE GENOMIC DNA]</scope>
    <source>
        <strain>ATCC 15305 / DSM 20229 / NCIMB 8711 / NCTC 7292 / S-41</strain>
    </source>
</reference>
<organism>
    <name type="scientific">Staphylococcus saprophyticus subsp. saprophyticus (strain ATCC 15305 / DSM 20229 / NCIMB 8711 / NCTC 7292 / S-41)</name>
    <dbReference type="NCBI Taxonomy" id="342451"/>
    <lineage>
        <taxon>Bacteria</taxon>
        <taxon>Bacillati</taxon>
        <taxon>Bacillota</taxon>
        <taxon>Bacilli</taxon>
        <taxon>Bacillales</taxon>
        <taxon>Staphylococcaceae</taxon>
        <taxon>Staphylococcus</taxon>
    </lineage>
</organism>